<accession>A6Q239</accession>
<reference key="1">
    <citation type="journal article" date="2007" name="Proc. Natl. Acad. Sci. U.S.A.">
        <title>Deep-sea vent epsilon-proteobacterial genomes provide insights into emergence of pathogens.</title>
        <authorList>
            <person name="Nakagawa S."/>
            <person name="Takaki Y."/>
            <person name="Shimamura S."/>
            <person name="Reysenbach A.-L."/>
            <person name="Takai K."/>
            <person name="Horikoshi K."/>
        </authorList>
    </citation>
    <scope>NUCLEOTIDE SEQUENCE [LARGE SCALE GENOMIC DNA]</scope>
    <source>
        <strain>SB155-2</strain>
    </source>
</reference>
<proteinExistence type="inferred from homology"/>
<sequence>MSKKIVVAMSGGVDSSYTANLLQSRGYEVIGVYMKFHPREEYHQKNIANIQKVAKHLGIEYHVLDRTKEFQERVYQPFVDSYVAGLTPNPCAMCNRVMKFTELIEFADELGVDNVATGHYAKTDGQFIYEATDKSKDQSYFLFNLKKEFLPRIIFPLGDWYKENVKKEAMKILLLKSIAEQKESSEICFVETNYIDVLKEHTEVEMPGEVVDTHGKVIGEHKGYMHYTIGKRKGFRLFKAHQPHYVLDIIPHKNRIVVGTKEQLEKRQIVLRGLNMFLDQKEFDCYIKIRYRTHKVPCHVKIDGSVASVTLKEPVYGVAKGQAGVFYDEEKVLGGGWIV</sequence>
<gene>
    <name evidence="1" type="primary">mnmA</name>
    <name type="ordered locus">NIS_0434</name>
</gene>
<dbReference type="EC" id="2.8.1.13" evidence="1"/>
<dbReference type="EMBL" id="AP009178">
    <property type="protein sequence ID" value="BAF69548.1"/>
    <property type="molecule type" value="Genomic_DNA"/>
</dbReference>
<dbReference type="RefSeq" id="WP_012081811.1">
    <property type="nucleotide sequence ID" value="NC_009662.1"/>
</dbReference>
<dbReference type="SMR" id="A6Q239"/>
<dbReference type="FunCoup" id="A6Q239">
    <property type="interactions" value="473"/>
</dbReference>
<dbReference type="STRING" id="387092.NIS_0434"/>
<dbReference type="KEGG" id="nis:NIS_0434"/>
<dbReference type="eggNOG" id="COG0482">
    <property type="taxonomic scope" value="Bacteria"/>
</dbReference>
<dbReference type="HOGENOM" id="CLU_035188_0_0_7"/>
<dbReference type="InParanoid" id="A6Q239"/>
<dbReference type="OrthoDB" id="9800696at2"/>
<dbReference type="Proteomes" id="UP000001118">
    <property type="component" value="Chromosome"/>
</dbReference>
<dbReference type="GO" id="GO:0005737">
    <property type="term" value="C:cytoplasm"/>
    <property type="evidence" value="ECO:0007669"/>
    <property type="project" value="UniProtKB-SubCell"/>
</dbReference>
<dbReference type="GO" id="GO:0005524">
    <property type="term" value="F:ATP binding"/>
    <property type="evidence" value="ECO:0007669"/>
    <property type="project" value="UniProtKB-KW"/>
</dbReference>
<dbReference type="GO" id="GO:0000049">
    <property type="term" value="F:tRNA binding"/>
    <property type="evidence" value="ECO:0007669"/>
    <property type="project" value="UniProtKB-KW"/>
</dbReference>
<dbReference type="GO" id="GO:0103016">
    <property type="term" value="F:tRNA-uridine 2-sulfurtransferase activity"/>
    <property type="evidence" value="ECO:0007669"/>
    <property type="project" value="UniProtKB-EC"/>
</dbReference>
<dbReference type="GO" id="GO:0002143">
    <property type="term" value="P:tRNA wobble position uridine thiolation"/>
    <property type="evidence" value="ECO:0007669"/>
    <property type="project" value="TreeGrafter"/>
</dbReference>
<dbReference type="CDD" id="cd01998">
    <property type="entry name" value="MnmA_TRMU-like"/>
    <property type="match status" value="1"/>
</dbReference>
<dbReference type="FunFam" id="2.30.30.280:FF:000001">
    <property type="entry name" value="tRNA-specific 2-thiouridylase MnmA"/>
    <property type="match status" value="1"/>
</dbReference>
<dbReference type="Gene3D" id="2.30.30.280">
    <property type="entry name" value="Adenine nucleotide alpha hydrolases-like domains"/>
    <property type="match status" value="1"/>
</dbReference>
<dbReference type="Gene3D" id="3.40.50.620">
    <property type="entry name" value="HUPs"/>
    <property type="match status" value="1"/>
</dbReference>
<dbReference type="Gene3D" id="2.40.30.10">
    <property type="entry name" value="Translation factors"/>
    <property type="match status" value="1"/>
</dbReference>
<dbReference type="HAMAP" id="MF_00144">
    <property type="entry name" value="tRNA_thiouridyl_MnmA"/>
    <property type="match status" value="1"/>
</dbReference>
<dbReference type="InterPro" id="IPR004506">
    <property type="entry name" value="MnmA-like"/>
</dbReference>
<dbReference type="InterPro" id="IPR046885">
    <property type="entry name" value="MnmA-like_C"/>
</dbReference>
<dbReference type="InterPro" id="IPR046884">
    <property type="entry name" value="MnmA-like_central"/>
</dbReference>
<dbReference type="InterPro" id="IPR023382">
    <property type="entry name" value="MnmA-like_central_sf"/>
</dbReference>
<dbReference type="InterPro" id="IPR014729">
    <property type="entry name" value="Rossmann-like_a/b/a_fold"/>
</dbReference>
<dbReference type="NCBIfam" id="NF001138">
    <property type="entry name" value="PRK00143.1"/>
    <property type="match status" value="1"/>
</dbReference>
<dbReference type="NCBIfam" id="TIGR00420">
    <property type="entry name" value="trmU"/>
    <property type="match status" value="1"/>
</dbReference>
<dbReference type="PANTHER" id="PTHR11933:SF5">
    <property type="entry name" value="MITOCHONDRIAL TRNA-SPECIFIC 2-THIOURIDYLASE 1"/>
    <property type="match status" value="1"/>
</dbReference>
<dbReference type="PANTHER" id="PTHR11933">
    <property type="entry name" value="TRNA 5-METHYLAMINOMETHYL-2-THIOURIDYLATE -METHYLTRANSFERASE"/>
    <property type="match status" value="1"/>
</dbReference>
<dbReference type="Pfam" id="PF03054">
    <property type="entry name" value="tRNA_Me_trans"/>
    <property type="match status" value="1"/>
</dbReference>
<dbReference type="Pfam" id="PF20258">
    <property type="entry name" value="tRNA_Me_trans_C"/>
    <property type="match status" value="1"/>
</dbReference>
<dbReference type="Pfam" id="PF20259">
    <property type="entry name" value="tRNA_Me_trans_M"/>
    <property type="match status" value="1"/>
</dbReference>
<dbReference type="SUPFAM" id="SSF52402">
    <property type="entry name" value="Adenine nucleotide alpha hydrolases-like"/>
    <property type="match status" value="1"/>
</dbReference>
<keyword id="KW-0067">ATP-binding</keyword>
<keyword id="KW-0963">Cytoplasm</keyword>
<keyword id="KW-1015">Disulfide bond</keyword>
<keyword id="KW-0547">Nucleotide-binding</keyword>
<keyword id="KW-1185">Reference proteome</keyword>
<keyword id="KW-0694">RNA-binding</keyword>
<keyword id="KW-0808">Transferase</keyword>
<keyword id="KW-0819">tRNA processing</keyword>
<keyword id="KW-0820">tRNA-binding</keyword>
<organism>
    <name type="scientific">Nitratiruptor sp. (strain SB155-2)</name>
    <dbReference type="NCBI Taxonomy" id="387092"/>
    <lineage>
        <taxon>Bacteria</taxon>
        <taxon>Pseudomonadati</taxon>
        <taxon>Campylobacterota</taxon>
        <taxon>Epsilonproteobacteria</taxon>
        <taxon>Nautiliales</taxon>
        <taxon>Nitratiruptoraceae</taxon>
        <taxon>Nitratiruptor</taxon>
    </lineage>
</organism>
<protein>
    <recommendedName>
        <fullName evidence="1">tRNA-specific 2-thiouridylase MnmA</fullName>
        <ecNumber evidence="1">2.8.1.13</ecNumber>
    </recommendedName>
</protein>
<comment type="function">
    <text evidence="1">Catalyzes the 2-thiolation of uridine at the wobble position (U34) of tRNA, leading to the formation of s(2)U34.</text>
</comment>
<comment type="catalytic activity">
    <reaction evidence="1">
        <text>S-sulfanyl-L-cysteinyl-[protein] + uridine(34) in tRNA + AH2 + ATP = 2-thiouridine(34) in tRNA + L-cysteinyl-[protein] + A + AMP + diphosphate + H(+)</text>
        <dbReference type="Rhea" id="RHEA:47032"/>
        <dbReference type="Rhea" id="RHEA-COMP:10131"/>
        <dbReference type="Rhea" id="RHEA-COMP:11726"/>
        <dbReference type="Rhea" id="RHEA-COMP:11727"/>
        <dbReference type="Rhea" id="RHEA-COMP:11728"/>
        <dbReference type="ChEBI" id="CHEBI:13193"/>
        <dbReference type="ChEBI" id="CHEBI:15378"/>
        <dbReference type="ChEBI" id="CHEBI:17499"/>
        <dbReference type="ChEBI" id="CHEBI:29950"/>
        <dbReference type="ChEBI" id="CHEBI:30616"/>
        <dbReference type="ChEBI" id="CHEBI:33019"/>
        <dbReference type="ChEBI" id="CHEBI:61963"/>
        <dbReference type="ChEBI" id="CHEBI:65315"/>
        <dbReference type="ChEBI" id="CHEBI:87170"/>
        <dbReference type="ChEBI" id="CHEBI:456215"/>
        <dbReference type="EC" id="2.8.1.13"/>
    </reaction>
</comment>
<comment type="subcellular location">
    <subcellularLocation>
        <location evidence="1">Cytoplasm</location>
    </subcellularLocation>
</comment>
<comment type="similarity">
    <text evidence="1">Belongs to the MnmA/TRMU family.</text>
</comment>
<feature type="chain" id="PRO_0000349714" description="tRNA-specific 2-thiouridylase MnmA">
    <location>
        <begin position="1"/>
        <end position="339"/>
    </location>
</feature>
<feature type="region of interest" description="Interaction with tRNA" evidence="1">
    <location>
        <begin position="136"/>
        <end position="138"/>
    </location>
</feature>
<feature type="region of interest" description="Interaction with tRNA" evidence="1">
    <location>
        <begin position="290"/>
        <end position="291"/>
    </location>
</feature>
<feature type="active site" description="Nucleophile" evidence="1">
    <location>
        <position position="94"/>
    </location>
</feature>
<feature type="active site" description="Cysteine persulfide intermediate" evidence="1">
    <location>
        <position position="188"/>
    </location>
</feature>
<feature type="binding site" evidence="1">
    <location>
        <begin position="8"/>
        <end position="15"/>
    </location>
    <ligand>
        <name>ATP</name>
        <dbReference type="ChEBI" id="CHEBI:30616"/>
    </ligand>
</feature>
<feature type="binding site" evidence="1">
    <location>
        <position position="34"/>
    </location>
    <ligand>
        <name>ATP</name>
        <dbReference type="ChEBI" id="CHEBI:30616"/>
    </ligand>
</feature>
<feature type="binding site" evidence="1">
    <location>
        <position position="118"/>
    </location>
    <ligand>
        <name>ATP</name>
        <dbReference type="ChEBI" id="CHEBI:30616"/>
    </ligand>
</feature>
<feature type="site" description="Interaction with tRNA" evidence="1">
    <location>
        <position position="119"/>
    </location>
</feature>
<feature type="site" description="Interaction with tRNA" evidence="1">
    <location>
        <position position="322"/>
    </location>
</feature>
<feature type="disulfide bond" description="Alternate" evidence="1">
    <location>
        <begin position="94"/>
        <end position="188"/>
    </location>
</feature>
<name>MNMA_NITSB</name>
<evidence type="ECO:0000255" key="1">
    <source>
        <dbReference type="HAMAP-Rule" id="MF_00144"/>
    </source>
</evidence>